<protein>
    <recommendedName>
        <fullName>3-dehydroquinate dehydratase</fullName>
        <shortName>3-dehydroquinase</shortName>
        <ecNumber>4.2.1.10</ecNumber>
    </recommendedName>
    <alternativeName>
        <fullName>Type II DHQase</fullName>
    </alternativeName>
</protein>
<organism>
    <name type="scientific">Thermotoga maritima (strain ATCC 43589 / DSM 3109 / JCM 10099 / NBRC 100826 / MSB8)</name>
    <dbReference type="NCBI Taxonomy" id="243274"/>
    <lineage>
        <taxon>Bacteria</taxon>
        <taxon>Thermotogati</taxon>
        <taxon>Thermotogota</taxon>
        <taxon>Thermotogae</taxon>
        <taxon>Thermotogales</taxon>
        <taxon>Thermotogaceae</taxon>
        <taxon>Thermotoga</taxon>
    </lineage>
</organism>
<feature type="chain" id="PRO_0000159934" description="3-dehydroquinate dehydratase">
    <location>
        <begin position="1"/>
        <end position="144"/>
    </location>
</feature>
<feature type="active site" description="Proton acceptor" evidence="1">
    <location>
        <position position="22"/>
    </location>
</feature>
<feature type="active site" description="Proton donor" evidence="1">
    <location>
        <position position="97"/>
    </location>
</feature>
<feature type="binding site" evidence="1">
    <location>
        <position position="71"/>
    </location>
    <ligand>
        <name>substrate</name>
    </ligand>
</feature>
<feature type="binding site" evidence="1">
    <location>
        <position position="77"/>
    </location>
    <ligand>
        <name>substrate</name>
    </ligand>
</feature>
<feature type="binding site" evidence="1">
    <location>
        <position position="84"/>
    </location>
    <ligand>
        <name>substrate</name>
    </ligand>
</feature>
<feature type="binding site" evidence="1">
    <location>
        <begin position="98"/>
        <end position="99"/>
    </location>
    <ligand>
        <name>substrate</name>
    </ligand>
</feature>
<feature type="binding site" evidence="1">
    <location>
        <position position="108"/>
    </location>
    <ligand>
        <name>substrate</name>
    </ligand>
</feature>
<feature type="site" description="Transition state stabilizer" evidence="1">
    <location>
        <position position="17"/>
    </location>
</feature>
<keyword id="KW-0028">Amino-acid biosynthesis</keyword>
<keyword id="KW-0057">Aromatic amino acid biosynthesis</keyword>
<keyword id="KW-0456">Lyase</keyword>
<keyword id="KW-1185">Reference proteome</keyword>
<accession>Q9WYI4</accession>
<evidence type="ECO:0000250" key="1"/>
<evidence type="ECO:0000305" key="2"/>
<reference key="1">
    <citation type="journal article" date="1999" name="Nature">
        <title>Evidence for lateral gene transfer between Archaea and Bacteria from genome sequence of Thermotoga maritima.</title>
        <authorList>
            <person name="Nelson K.E."/>
            <person name="Clayton R.A."/>
            <person name="Gill S.R."/>
            <person name="Gwinn M.L."/>
            <person name="Dodson R.J."/>
            <person name="Haft D.H."/>
            <person name="Hickey E.K."/>
            <person name="Peterson J.D."/>
            <person name="Nelson W.C."/>
            <person name="Ketchum K.A."/>
            <person name="McDonald L.A."/>
            <person name="Utterback T.R."/>
            <person name="Malek J.A."/>
            <person name="Linher K.D."/>
            <person name="Garrett M.M."/>
            <person name="Stewart A.M."/>
            <person name="Cotton M.D."/>
            <person name="Pratt M.S."/>
            <person name="Phillips C.A."/>
            <person name="Richardson D.L."/>
            <person name="Heidelberg J.F."/>
            <person name="Sutton G.G."/>
            <person name="Fleischmann R.D."/>
            <person name="Eisen J.A."/>
            <person name="White O."/>
            <person name="Salzberg S.L."/>
            <person name="Smith H.O."/>
            <person name="Venter J.C."/>
            <person name="Fraser C.M."/>
        </authorList>
    </citation>
    <scope>NUCLEOTIDE SEQUENCE [LARGE SCALE GENOMIC DNA]</scope>
    <source>
        <strain>ATCC 43589 / DSM 3109 / JCM 10099 / NBRC 100826 / MSB8</strain>
    </source>
</reference>
<dbReference type="EC" id="4.2.1.10"/>
<dbReference type="EMBL" id="AE000512">
    <property type="protein sequence ID" value="AAD35435.1"/>
    <property type="molecule type" value="Genomic_DNA"/>
</dbReference>
<dbReference type="PIR" id="C72389">
    <property type="entry name" value="C72389"/>
</dbReference>
<dbReference type="RefSeq" id="NP_228160.1">
    <property type="nucleotide sequence ID" value="NC_000853.1"/>
</dbReference>
<dbReference type="RefSeq" id="WP_004083137.1">
    <property type="nucleotide sequence ID" value="NC_000853.1"/>
</dbReference>
<dbReference type="SMR" id="Q9WYI4"/>
<dbReference type="FunCoup" id="Q9WYI4">
    <property type="interactions" value="176"/>
</dbReference>
<dbReference type="STRING" id="243274.TM_0349"/>
<dbReference type="PaxDb" id="243274-THEMA_02970"/>
<dbReference type="EnsemblBacteria" id="AAD35435">
    <property type="protein sequence ID" value="AAD35435"/>
    <property type="gene ID" value="TM_0349"/>
</dbReference>
<dbReference type="KEGG" id="tma:TM0349"/>
<dbReference type="KEGG" id="tmi:THEMA_02970"/>
<dbReference type="KEGG" id="tmm:Tmari_0347"/>
<dbReference type="KEGG" id="tmw:THMA_0357"/>
<dbReference type="eggNOG" id="COG0757">
    <property type="taxonomic scope" value="Bacteria"/>
</dbReference>
<dbReference type="InParanoid" id="Q9WYI4"/>
<dbReference type="OrthoDB" id="9790793at2"/>
<dbReference type="UniPathway" id="UPA00053">
    <property type="reaction ID" value="UER00086"/>
</dbReference>
<dbReference type="Proteomes" id="UP000008183">
    <property type="component" value="Chromosome"/>
</dbReference>
<dbReference type="GO" id="GO:0003855">
    <property type="term" value="F:3-dehydroquinate dehydratase activity"/>
    <property type="evidence" value="ECO:0000318"/>
    <property type="project" value="GO_Central"/>
</dbReference>
<dbReference type="GO" id="GO:0008652">
    <property type="term" value="P:amino acid biosynthetic process"/>
    <property type="evidence" value="ECO:0007669"/>
    <property type="project" value="UniProtKB-KW"/>
</dbReference>
<dbReference type="GO" id="GO:0009073">
    <property type="term" value="P:aromatic amino acid family biosynthetic process"/>
    <property type="evidence" value="ECO:0007669"/>
    <property type="project" value="UniProtKB-KW"/>
</dbReference>
<dbReference type="GO" id="GO:0009423">
    <property type="term" value="P:chorismate biosynthetic process"/>
    <property type="evidence" value="ECO:0007669"/>
    <property type="project" value="UniProtKB-UniRule"/>
</dbReference>
<dbReference type="GO" id="GO:0019631">
    <property type="term" value="P:quinate catabolic process"/>
    <property type="evidence" value="ECO:0000318"/>
    <property type="project" value="GO_Central"/>
</dbReference>
<dbReference type="CDD" id="cd00466">
    <property type="entry name" value="DHQase_II"/>
    <property type="match status" value="1"/>
</dbReference>
<dbReference type="Gene3D" id="3.40.50.9100">
    <property type="entry name" value="Dehydroquinase, class II"/>
    <property type="match status" value="1"/>
</dbReference>
<dbReference type="HAMAP" id="MF_00169">
    <property type="entry name" value="AroQ"/>
    <property type="match status" value="1"/>
</dbReference>
<dbReference type="InterPro" id="IPR001874">
    <property type="entry name" value="DHquinase_II"/>
</dbReference>
<dbReference type="InterPro" id="IPR018509">
    <property type="entry name" value="DHquinase_II_CS"/>
</dbReference>
<dbReference type="InterPro" id="IPR036441">
    <property type="entry name" value="DHquinase_II_sf"/>
</dbReference>
<dbReference type="NCBIfam" id="TIGR01088">
    <property type="entry name" value="aroQ"/>
    <property type="match status" value="1"/>
</dbReference>
<dbReference type="NCBIfam" id="NF003805">
    <property type="entry name" value="PRK05395.1-2"/>
    <property type="match status" value="1"/>
</dbReference>
<dbReference type="NCBIfam" id="NF003807">
    <property type="entry name" value="PRK05395.1-4"/>
    <property type="match status" value="1"/>
</dbReference>
<dbReference type="PANTHER" id="PTHR21272">
    <property type="entry name" value="CATABOLIC 3-DEHYDROQUINASE"/>
    <property type="match status" value="1"/>
</dbReference>
<dbReference type="PANTHER" id="PTHR21272:SF3">
    <property type="entry name" value="CATABOLIC 3-DEHYDROQUINASE"/>
    <property type="match status" value="1"/>
</dbReference>
<dbReference type="Pfam" id="PF01220">
    <property type="entry name" value="DHquinase_II"/>
    <property type="match status" value="1"/>
</dbReference>
<dbReference type="PIRSF" id="PIRSF001399">
    <property type="entry name" value="DHquinase_II"/>
    <property type="match status" value="1"/>
</dbReference>
<dbReference type="SUPFAM" id="SSF52304">
    <property type="entry name" value="Type II 3-dehydroquinate dehydratase"/>
    <property type="match status" value="1"/>
</dbReference>
<dbReference type="PROSITE" id="PS01029">
    <property type="entry name" value="DEHYDROQUINASE_II"/>
    <property type="match status" value="1"/>
</dbReference>
<sequence length="144" mass="16566">MKVLVVNGPNLNMLGKRDKNIYGNFSHEDLVKMIEDWGRKNGVEVEVFQSNHEGKILDRLHRLDFDGLVINPGAFTHYSYAIRDALEIVKVPKVEVHISNIHRREEFRRRSVTAEVCDGQISGLGVYGYLLALEYIKKKLEELT</sequence>
<proteinExistence type="inferred from homology"/>
<name>AROQ_THEMA</name>
<comment type="function">
    <text evidence="1">Catalyzes a trans-dehydration via an enolate intermediate.</text>
</comment>
<comment type="catalytic activity">
    <reaction>
        <text>3-dehydroquinate = 3-dehydroshikimate + H2O</text>
        <dbReference type="Rhea" id="RHEA:21096"/>
        <dbReference type="ChEBI" id="CHEBI:15377"/>
        <dbReference type="ChEBI" id="CHEBI:16630"/>
        <dbReference type="ChEBI" id="CHEBI:32364"/>
        <dbReference type="EC" id="4.2.1.10"/>
    </reaction>
</comment>
<comment type="pathway">
    <text>Metabolic intermediate biosynthesis; chorismate biosynthesis; chorismate from D-erythrose 4-phosphate and phosphoenolpyruvate: step 3/7.</text>
</comment>
<comment type="subunit">
    <text evidence="1">Homododecamer.</text>
</comment>
<comment type="similarity">
    <text evidence="2">Belongs to the type-II 3-dehydroquinase family.</text>
</comment>
<gene>
    <name type="primary">aroQ</name>
    <name type="ordered locus">TM_0349</name>
</gene>